<keyword id="KW-0004">4Fe-4S</keyword>
<keyword id="KW-0238">DNA-binding</keyword>
<keyword id="KW-0269">Exonuclease</keyword>
<keyword id="KW-0378">Hydrolase</keyword>
<keyword id="KW-0408">Iron</keyword>
<keyword id="KW-0411">Iron-sulfur</keyword>
<keyword id="KW-0460">Magnesium</keyword>
<keyword id="KW-0479">Metal-binding</keyword>
<keyword id="KW-0496">Mitochondrion</keyword>
<keyword id="KW-0540">Nuclease</keyword>
<keyword id="KW-1185">Reference proteome</keyword>
<keyword id="KW-0809">Transit peptide</keyword>
<sequence length="527" mass="59075">MRTVRQRWATGWGRALHTSGSAPAGSSAESALLPEMGQLDPKVAAAPRRKYLSAKYRVVGKLFQQAENGGYLAYRKPAALENPYLDVQARPRVDGATGQIVYQGTPRLSVTRLLTKQWCELRTAYDLYSNMPLFESKAMRIGKRAHRKLENKLHGASDAAATQALERLQLAVPVDPLHRLAADWAGAIDRMCTLFQKGEARELLCHGYISADHGAFVEGPVREDSDVLVSGVIDHLVLTQRGGGSPLSALQPERSLQFPSDMAELVPFLKDLGERRAAEWEVVVGDIKTRKYTQVPSQASVVETSRLQVMYYRRFLEDLGADVDKAYEKLLTNAQRRGLDVDAPLAAGSAISVMEGIPQLGADMLRLVRGDPIGFGPFDSYNRYAAHDTYDFTQHAALLQDQPELQKYAVFFGQWKTPFNLRFLAARMAQLYGCIAPLLSNTLLIEYYMGGECFHVNTFKYDAAELRKHCEDSARFWFGKREIEPIEPTIRNVNAYCKFCDYKDICLWRKEAVLGWKSLGEELRGLP</sequence>
<name>EXO5_EREGS</name>
<feature type="transit peptide" description="Mitochondrion" evidence="2">
    <location>
        <begin position="1"/>
        <end position="23"/>
    </location>
</feature>
<feature type="chain" id="PRO_0000285320" description="Exonuclease V, mitochondrial">
    <location>
        <begin position="24"/>
        <end position="527"/>
    </location>
</feature>
<feature type="binding site" evidence="1">
    <location>
        <position position="119"/>
    </location>
    <ligand>
        <name>[4Fe-4S] cluster</name>
        <dbReference type="ChEBI" id="CHEBI:49883"/>
    </ligand>
</feature>
<feature type="binding site" evidence="1">
    <location>
        <position position="497"/>
    </location>
    <ligand>
        <name>[4Fe-4S] cluster</name>
        <dbReference type="ChEBI" id="CHEBI:49883"/>
    </ligand>
</feature>
<feature type="binding site" evidence="1">
    <location>
        <position position="500"/>
    </location>
    <ligand>
        <name>[4Fe-4S] cluster</name>
        <dbReference type="ChEBI" id="CHEBI:49883"/>
    </ligand>
</feature>
<feature type="binding site" evidence="1">
    <location>
        <position position="506"/>
    </location>
    <ligand>
        <name>[4Fe-4S] cluster</name>
        <dbReference type="ChEBI" id="CHEBI:49883"/>
    </ligand>
</feature>
<comment type="function">
    <text evidence="1">Single strand DNA specific 5' exonuclease involved in mitochondrial DNA replication and recombination. Releases dinucleotides as main products of catalysis. Has the capacity to slide across 5'double-stranded DNA or 5'RNA sequences and resumes cutting two nucleotides downstream of the double-stranded-to-single-stranded junction or RNA-to-DNA junction, respectively (By similarity).</text>
</comment>
<comment type="cofactor">
    <cofactor evidence="1">
        <name>Mg(2+)</name>
        <dbReference type="ChEBI" id="CHEBI:18420"/>
    </cofactor>
</comment>
<comment type="cofactor">
    <cofactor evidence="1">
        <name>[4Fe-4S] cluster</name>
        <dbReference type="ChEBI" id="CHEBI:49883"/>
    </cofactor>
    <text evidence="1">Binds 1 [4Fe-4S] cluster.</text>
</comment>
<comment type="subunit">
    <text evidence="1">Monomer.</text>
</comment>
<comment type="subcellular location">
    <subcellularLocation>
        <location>Mitochondrion</location>
    </subcellularLocation>
</comment>
<comment type="similarity">
    <text evidence="3">Belongs to the EXO5 family.</text>
</comment>
<protein>
    <recommendedName>
        <fullName>Exonuclease V, mitochondrial</fullName>
        <shortName>Exo V</shortName>
        <ecNumber>3.1.-.-</ecNumber>
    </recommendedName>
    <alternativeName>
        <fullName>Defects in morphology protein 1</fullName>
    </alternativeName>
</protein>
<reference key="1">
    <citation type="journal article" date="2004" name="Science">
        <title>The Ashbya gossypii genome as a tool for mapping the ancient Saccharomyces cerevisiae genome.</title>
        <authorList>
            <person name="Dietrich F.S."/>
            <person name="Voegeli S."/>
            <person name="Brachat S."/>
            <person name="Lerch A."/>
            <person name="Gates K."/>
            <person name="Steiner S."/>
            <person name="Mohr C."/>
            <person name="Poehlmann R."/>
            <person name="Luedi P."/>
            <person name="Choi S."/>
            <person name="Wing R.A."/>
            <person name="Flavier A."/>
            <person name="Gaffney T.D."/>
            <person name="Philippsen P."/>
        </authorList>
    </citation>
    <scope>NUCLEOTIDE SEQUENCE [LARGE SCALE GENOMIC DNA]</scope>
    <source>
        <strain>ATCC 10895 / CBS 109.51 / FGSC 9923 / NRRL Y-1056</strain>
    </source>
</reference>
<reference key="2">
    <citation type="journal article" date="2013" name="G3 (Bethesda)">
        <title>Genomes of Ashbya fungi isolated from insects reveal four mating-type loci, numerous translocations, lack of transposons, and distinct gene duplications.</title>
        <authorList>
            <person name="Dietrich F.S."/>
            <person name="Voegeli S."/>
            <person name="Kuo S."/>
            <person name="Philippsen P."/>
        </authorList>
    </citation>
    <scope>GENOME REANNOTATION</scope>
    <source>
        <strain>ATCC 10895 / CBS 109.51 / FGSC 9923 / NRRL Y-1056</strain>
    </source>
</reference>
<dbReference type="EC" id="3.1.-.-"/>
<dbReference type="EMBL" id="AE016817">
    <property type="protein sequence ID" value="AAS51974.1"/>
    <property type="molecule type" value="Genomic_DNA"/>
</dbReference>
<dbReference type="RefSeq" id="NP_984150.1">
    <property type="nucleotide sequence ID" value="NM_209503.1"/>
</dbReference>
<dbReference type="FunCoup" id="Q75A64">
    <property type="interactions" value="26"/>
</dbReference>
<dbReference type="EnsemblFungi" id="AAS51974">
    <property type="protein sequence ID" value="AAS51974"/>
    <property type="gene ID" value="AGOS_ADR054C"/>
</dbReference>
<dbReference type="GeneID" id="4620299"/>
<dbReference type="KEGG" id="ago:AGOS_ADR054C"/>
<dbReference type="eggNOG" id="ENOG502QR0P">
    <property type="taxonomic scope" value="Eukaryota"/>
</dbReference>
<dbReference type="HOGENOM" id="CLU_019985_0_0_1"/>
<dbReference type="InParanoid" id="Q75A64"/>
<dbReference type="OMA" id="LQVMYYR"/>
<dbReference type="OrthoDB" id="354769at2759"/>
<dbReference type="Proteomes" id="UP000000591">
    <property type="component" value="Chromosome IV"/>
</dbReference>
<dbReference type="GO" id="GO:0005739">
    <property type="term" value="C:mitochondrion"/>
    <property type="evidence" value="ECO:0000318"/>
    <property type="project" value="GO_Central"/>
</dbReference>
<dbReference type="GO" id="GO:0005634">
    <property type="term" value="C:nucleus"/>
    <property type="evidence" value="ECO:0000318"/>
    <property type="project" value="GO_Central"/>
</dbReference>
<dbReference type="GO" id="GO:0051539">
    <property type="term" value="F:4 iron, 4 sulfur cluster binding"/>
    <property type="evidence" value="ECO:0007669"/>
    <property type="project" value="UniProtKB-KW"/>
</dbReference>
<dbReference type="GO" id="GO:0003677">
    <property type="term" value="F:DNA binding"/>
    <property type="evidence" value="ECO:0007669"/>
    <property type="project" value="UniProtKB-KW"/>
</dbReference>
<dbReference type="GO" id="GO:0046872">
    <property type="term" value="F:metal ion binding"/>
    <property type="evidence" value="ECO:0007669"/>
    <property type="project" value="UniProtKB-KW"/>
</dbReference>
<dbReference type="GO" id="GO:0045145">
    <property type="term" value="F:single-stranded DNA 5'-3' DNA exonuclease activity"/>
    <property type="evidence" value="ECO:0000318"/>
    <property type="project" value="GO_Central"/>
</dbReference>
<dbReference type="GO" id="GO:0036297">
    <property type="term" value="P:interstrand cross-link repair"/>
    <property type="evidence" value="ECO:0000318"/>
    <property type="project" value="GO_Central"/>
</dbReference>
<dbReference type="GO" id="GO:0000002">
    <property type="term" value="P:mitochondrial genome maintenance"/>
    <property type="evidence" value="ECO:0007669"/>
    <property type="project" value="InterPro"/>
</dbReference>
<dbReference type="InterPro" id="IPR016610">
    <property type="entry name" value="Exo5"/>
</dbReference>
<dbReference type="InterPro" id="IPR019190">
    <property type="entry name" value="EXOV"/>
</dbReference>
<dbReference type="PANTHER" id="PTHR14464">
    <property type="entry name" value="EXONUCLEASE V"/>
    <property type="match status" value="1"/>
</dbReference>
<dbReference type="PANTHER" id="PTHR14464:SF4">
    <property type="entry name" value="EXONUCLEASE V"/>
    <property type="match status" value="1"/>
</dbReference>
<dbReference type="Pfam" id="PF09810">
    <property type="entry name" value="Exo5"/>
    <property type="match status" value="1"/>
</dbReference>
<dbReference type="PIRSF" id="PIRSF013220">
    <property type="entry name" value="UCP013220"/>
    <property type="match status" value="1"/>
</dbReference>
<evidence type="ECO:0000250" key="1"/>
<evidence type="ECO:0000255" key="2"/>
<evidence type="ECO:0000305" key="3"/>
<organism>
    <name type="scientific">Eremothecium gossypii (strain ATCC 10895 / CBS 109.51 / FGSC 9923 / NRRL Y-1056)</name>
    <name type="common">Yeast</name>
    <name type="synonym">Ashbya gossypii</name>
    <dbReference type="NCBI Taxonomy" id="284811"/>
    <lineage>
        <taxon>Eukaryota</taxon>
        <taxon>Fungi</taxon>
        <taxon>Dikarya</taxon>
        <taxon>Ascomycota</taxon>
        <taxon>Saccharomycotina</taxon>
        <taxon>Saccharomycetes</taxon>
        <taxon>Saccharomycetales</taxon>
        <taxon>Saccharomycetaceae</taxon>
        <taxon>Eremothecium</taxon>
    </lineage>
</organism>
<accession>Q75A64</accession>
<gene>
    <name type="primary">EXO5</name>
    <name type="synonym">DEM1</name>
    <name type="ordered locus">ADR054C</name>
</gene>
<proteinExistence type="inferred from homology"/>